<accession>Q14FJ4</accession>
<accession>Q2UXQ8</accession>
<dbReference type="EC" id="3.4.24.-"/>
<dbReference type="EMBL" id="AM039693">
    <property type="protein sequence ID" value="CAJ01681.1"/>
    <property type="molecule type" value="mRNA"/>
</dbReference>
<dbReference type="EMBL" id="AM286799">
    <property type="protein sequence ID" value="CAL18288.1"/>
    <property type="molecule type" value="Genomic_DNA"/>
</dbReference>
<dbReference type="SMR" id="Q14FJ4"/>
<dbReference type="MEROPS" id="M12.164"/>
<dbReference type="GO" id="GO:0005576">
    <property type="term" value="C:extracellular region"/>
    <property type="evidence" value="ECO:0007669"/>
    <property type="project" value="UniProtKB-SubCell"/>
</dbReference>
<dbReference type="GO" id="GO:0005886">
    <property type="term" value="C:plasma membrane"/>
    <property type="evidence" value="ECO:0007669"/>
    <property type="project" value="TreeGrafter"/>
</dbReference>
<dbReference type="GO" id="GO:0046872">
    <property type="term" value="F:metal ion binding"/>
    <property type="evidence" value="ECO:0007669"/>
    <property type="project" value="UniProtKB-KW"/>
</dbReference>
<dbReference type="GO" id="GO:0004222">
    <property type="term" value="F:metalloendopeptidase activity"/>
    <property type="evidence" value="ECO:0007669"/>
    <property type="project" value="InterPro"/>
</dbReference>
<dbReference type="GO" id="GO:0090729">
    <property type="term" value="F:toxin activity"/>
    <property type="evidence" value="ECO:0007669"/>
    <property type="project" value="UniProtKB-KW"/>
</dbReference>
<dbReference type="GO" id="GO:0006508">
    <property type="term" value="P:proteolysis"/>
    <property type="evidence" value="ECO:0007669"/>
    <property type="project" value="UniProtKB-KW"/>
</dbReference>
<dbReference type="CDD" id="cd04269">
    <property type="entry name" value="ZnMc_adamalysin_II_like"/>
    <property type="match status" value="1"/>
</dbReference>
<dbReference type="FunFam" id="3.40.390.10:FF:000002">
    <property type="entry name" value="Disintegrin and metalloproteinase domain-containing protein 22"/>
    <property type="match status" value="1"/>
</dbReference>
<dbReference type="Gene3D" id="3.40.390.10">
    <property type="entry name" value="Collagenase (Catalytic Domain)"/>
    <property type="match status" value="1"/>
</dbReference>
<dbReference type="Gene3D" id="4.10.70.10">
    <property type="entry name" value="Disintegrin domain"/>
    <property type="match status" value="1"/>
</dbReference>
<dbReference type="InterPro" id="IPR018358">
    <property type="entry name" value="Disintegrin_CS"/>
</dbReference>
<dbReference type="InterPro" id="IPR001762">
    <property type="entry name" value="Disintegrin_dom"/>
</dbReference>
<dbReference type="InterPro" id="IPR036436">
    <property type="entry name" value="Disintegrin_dom_sf"/>
</dbReference>
<dbReference type="InterPro" id="IPR024079">
    <property type="entry name" value="MetalloPept_cat_dom_sf"/>
</dbReference>
<dbReference type="InterPro" id="IPR001590">
    <property type="entry name" value="Peptidase_M12B"/>
</dbReference>
<dbReference type="InterPro" id="IPR002870">
    <property type="entry name" value="Peptidase_M12B_N"/>
</dbReference>
<dbReference type="InterPro" id="IPR034027">
    <property type="entry name" value="Reprolysin_adamalysin"/>
</dbReference>
<dbReference type="PANTHER" id="PTHR11905">
    <property type="entry name" value="ADAM A DISINTEGRIN AND METALLOPROTEASE DOMAIN"/>
    <property type="match status" value="1"/>
</dbReference>
<dbReference type="PANTHER" id="PTHR11905:SF32">
    <property type="entry name" value="DISINTEGRIN AND METALLOPROTEINASE DOMAIN-CONTAINING PROTEIN 28"/>
    <property type="match status" value="1"/>
</dbReference>
<dbReference type="Pfam" id="PF01562">
    <property type="entry name" value="Pep_M12B_propep"/>
    <property type="match status" value="1"/>
</dbReference>
<dbReference type="Pfam" id="PF01421">
    <property type="entry name" value="Reprolysin"/>
    <property type="match status" value="1"/>
</dbReference>
<dbReference type="PRINTS" id="PR00289">
    <property type="entry name" value="DISINTEGRIN"/>
</dbReference>
<dbReference type="SMART" id="SM00050">
    <property type="entry name" value="DISIN"/>
    <property type="match status" value="1"/>
</dbReference>
<dbReference type="SUPFAM" id="SSF57552">
    <property type="entry name" value="Blood coagulation inhibitor (disintegrin)"/>
    <property type="match status" value="1"/>
</dbReference>
<dbReference type="SUPFAM" id="SSF55486">
    <property type="entry name" value="Metalloproteases ('zincins'), catalytic domain"/>
    <property type="match status" value="1"/>
</dbReference>
<dbReference type="PROSITE" id="PS50215">
    <property type="entry name" value="ADAM_MEPRO"/>
    <property type="match status" value="1"/>
</dbReference>
<dbReference type="PROSITE" id="PS00427">
    <property type="entry name" value="DISINTEGRIN_1"/>
    <property type="match status" value="1"/>
</dbReference>
<dbReference type="PROSITE" id="PS50214">
    <property type="entry name" value="DISINTEGRIN_2"/>
    <property type="match status" value="1"/>
</dbReference>
<dbReference type="PROSITE" id="PS00142">
    <property type="entry name" value="ZINC_PROTEASE"/>
    <property type="match status" value="1"/>
</dbReference>
<reference key="1">
    <citation type="journal article" date="2006" name="J. Mol. Evol.">
        <title>Molecular cloning of Echis ocellatus disintegrins reveals non-venom-secreted proteins and a pathway for the evolution of ocellatusin.</title>
        <authorList>
            <person name="Juarez P."/>
            <person name="Wagstaff S.C."/>
            <person name="Sanz L."/>
            <person name="Harrison R.A."/>
            <person name="Calvete J.J."/>
        </authorList>
    </citation>
    <scope>NUCLEOTIDE SEQUENCE [MRNA]</scope>
    <source>
        <tissue>Venom gland</tissue>
    </source>
</reference>
<reference key="2">
    <citation type="journal article" date="2006" name="PLoS Med.">
        <title>Bioinformatics and multiepitope DNA immunization to design rational snake antivenom.</title>
        <authorList>
            <person name="Wagstaff S.C."/>
            <person name="Laing G.D."/>
            <person name="Theakston R.D.G."/>
            <person name="Papaspyridis C."/>
            <person name="Harrison R.A."/>
        </authorList>
    </citation>
    <scope>NUCLEOTIDE SEQUENCE [MRNA]</scope>
    <source>
        <tissue>Venom gland</tissue>
    </source>
</reference>
<reference key="3">
    <citation type="journal article" date="2007" name="J. Mol. Evol.">
        <title>Loss of introns along the evolutionary diversification pathway of snake venom disintegrins evidenced by sequence analysis of genomic DNA from Macrovipera lebetina transmediterranea and Echis ocellatus.</title>
        <authorList>
            <person name="Bazaa A."/>
            <person name="Juarez P."/>
            <person name="Marrakchi N."/>
            <person name="Bel Lasfer Z."/>
            <person name="El Ayeb M."/>
            <person name="Calvete J.J."/>
            <person name="Sanz L."/>
        </authorList>
    </citation>
    <scope>NUCLEOTIDE SEQUENCE [GENOMIC DNA] OF 410-494</scope>
    <source>
        <tissue>Liver</tissue>
    </source>
</reference>
<reference key="4">
    <citation type="journal article" date="2002" name="FEBS Lett.">
        <title>Characterization of a monomeric disintegrin, ocellatusin, present in the venom of the Nigerian carpet viper, Echis ocellatus.</title>
        <authorList>
            <person name="Smith J.B."/>
            <person name="Theakston R.D."/>
            <person name="Coelho A.L."/>
            <person name="Barja-Fidalgo C."/>
            <person name="Calvete J.J."/>
            <person name="Marcinkiewicz C."/>
        </authorList>
    </citation>
    <scope>PROTEIN SEQUENCE OF 432-481</scope>
    <scope>FUNCTION</scope>
    <scope>SUBUNIT</scope>
    <scope>MASS SPECTROMETRY</scope>
    <scope>SUBCELLULAR LOCATION</scope>
    <source>
        <tissue>Venom</tissue>
    </source>
</reference>
<evidence type="ECO:0000250" key="1"/>
<evidence type="ECO:0000250" key="2">
    <source>
        <dbReference type="UniProtKB" id="P17347"/>
    </source>
</evidence>
<evidence type="ECO:0000255" key="3"/>
<evidence type="ECO:0000255" key="4">
    <source>
        <dbReference type="PROSITE-ProRule" id="PRU00068"/>
    </source>
</evidence>
<evidence type="ECO:0000255" key="5">
    <source>
        <dbReference type="PROSITE-ProRule" id="PRU00276"/>
    </source>
</evidence>
<evidence type="ECO:0000255" key="6">
    <source>
        <dbReference type="PROSITE-ProRule" id="PRU10095"/>
    </source>
</evidence>
<evidence type="ECO:0000269" key="7">
    <source>
    </source>
</evidence>
<evidence type="ECO:0000303" key="8">
    <source>
    </source>
</evidence>
<evidence type="ECO:0000303" key="9">
    <source>
    </source>
</evidence>
<evidence type="ECO:0000303" key="10">
    <source>
    </source>
</evidence>
<evidence type="ECO:0000305" key="11"/>
<evidence type="ECO:0000305" key="12">
    <source>
    </source>
</evidence>
<organism>
    <name type="scientific">Echis ocellatus</name>
    <name type="common">Ocellated saw-scaled viper</name>
    <dbReference type="NCBI Taxonomy" id="99586"/>
    <lineage>
        <taxon>Eukaryota</taxon>
        <taxon>Metazoa</taxon>
        <taxon>Chordata</taxon>
        <taxon>Craniata</taxon>
        <taxon>Vertebrata</taxon>
        <taxon>Euteleostomi</taxon>
        <taxon>Lepidosauria</taxon>
        <taxon>Squamata</taxon>
        <taxon>Bifurcata</taxon>
        <taxon>Unidentata</taxon>
        <taxon>Episquamata</taxon>
        <taxon>Toxicofera</taxon>
        <taxon>Serpentes</taxon>
        <taxon>Colubroidea</taxon>
        <taxon>Viperidae</taxon>
        <taxon>Viperinae</taxon>
        <taxon>Echis</taxon>
    </lineage>
</organism>
<sequence length="494" mass="55165">MIQVLLVTICLAVFPFQGSSKTLKSGNVNDYEVVNPQKITGLPVGAFKQPEKKYEDAVQYEFEVNGEPVVLHLEKNKGLFSEDYSETHYSPDGSEITTNPPVEDHCYYHGRVQNDADSTASISTCNGLKGFFTLRGETYLIEPLKVPDSESHAVYKYEDAKKKDEAPKMCGVTLTNWESDEPIKKASHLVATSEQQHFHPRYVQLVIVADHSMVTKNNNDLTALTTWIHQIVNDMIVMYRILNIHITLANVEIWSSGDLIAVTSSAPTTLRSFGEWRARNLVNRITHDNAQLITAVHLDNLIGYGYLGTMCDPQSSVAITEDHSTDHLWVAATMAHEMGHNLGMNHDGNQCNCGAAGCIMSAIISQYRSYQFSDCSMNEYRNYITTHNPPCILNQALRTDTVSTPVSENELLQNSVNPCYDPVTCQPKEKEDCESGPCCDNCKFLKEGTICKMARGDNMHDYCNGKTCDCPRNPYKGEHDPMEWPAPAKGSVLM</sequence>
<protein>
    <recommendedName>
        <fullName>Zinc metalloproteinase/disintegrin</fullName>
    </recommendedName>
    <alternativeName>
        <fullName evidence="10">Long ocellatusin precursor Eo-00006</fullName>
        <shortName evidence="9">EOC00006</shortName>
    </alternativeName>
    <component>
        <recommendedName>
            <fullName>Snake venom metalloproteinase Eoc6</fullName>
            <shortName>SVMP</shortName>
            <ecNumber>3.4.24.-</ecNumber>
        </recommendedName>
    </component>
    <component>
        <recommendedName>
            <fullName evidence="8 10">Disintegrin ocellatusin</fullName>
        </recommendedName>
    </component>
</protein>
<proteinExistence type="evidence at protein level"/>
<keyword id="KW-1217">Cell adhesion impairing toxin</keyword>
<keyword id="KW-0903">Direct protein sequencing</keyword>
<keyword id="KW-1015">Disulfide bond</keyword>
<keyword id="KW-1199">Hemostasis impairing toxin</keyword>
<keyword id="KW-0378">Hydrolase</keyword>
<keyword id="KW-0479">Metal-binding</keyword>
<keyword id="KW-0482">Metalloprotease</keyword>
<keyword id="KW-1201">Platelet aggregation inhibiting toxin</keyword>
<keyword id="KW-0645">Protease</keyword>
<keyword id="KW-0964">Secreted</keyword>
<keyword id="KW-0732">Signal</keyword>
<keyword id="KW-0800">Toxin</keyword>
<keyword id="KW-0862">Zinc</keyword>
<keyword id="KW-0865">Zymogen</keyword>
<feature type="signal peptide" evidence="3">
    <location>
        <begin position="1"/>
        <end position="20"/>
    </location>
</feature>
<feature type="propeptide" id="PRO_0000319038" evidence="1">
    <location>
        <begin position="21"/>
        <end position="193"/>
    </location>
</feature>
<feature type="chain" id="PRO_0000319039" description="Snake venom metalloproteinase Eoc6">
    <location>
        <begin position="194"/>
        <end position="409"/>
    </location>
</feature>
<feature type="propeptide" id="PRO_0000319040" evidence="1">
    <location>
        <begin position="410"/>
        <end position="431"/>
    </location>
</feature>
<feature type="chain" id="PRO_5000080665" description="Disintegrin ocellatusin" evidence="7">
    <location>
        <begin position="432"/>
        <end position="481"/>
    </location>
</feature>
<feature type="propeptide" id="PRO_0000319041" evidence="1">
    <location>
        <begin position="482"/>
        <end position="494"/>
    </location>
</feature>
<feature type="domain" description="Peptidase M12B" evidence="5">
    <location>
        <begin position="201"/>
        <end position="396"/>
    </location>
</feature>
<feature type="domain" description="Disintegrin" evidence="4">
    <location>
        <begin position="417"/>
        <end position="478"/>
    </location>
</feature>
<feature type="short sequence motif" description="Cell attachment site">
    <location>
        <begin position="455"/>
        <end position="457"/>
    </location>
</feature>
<feature type="active site" evidence="5 6">
    <location>
        <position position="337"/>
    </location>
</feature>
<feature type="binding site" evidence="5">
    <location>
        <position position="336"/>
    </location>
    <ligand>
        <name>Zn(2+)</name>
        <dbReference type="ChEBI" id="CHEBI:29105"/>
        <note>catalytic</note>
    </ligand>
</feature>
<feature type="binding site" evidence="5">
    <location>
        <position position="340"/>
    </location>
    <ligand>
        <name>Zn(2+)</name>
        <dbReference type="ChEBI" id="CHEBI:29105"/>
        <note>catalytic</note>
    </ligand>
</feature>
<feature type="binding site" evidence="5">
    <location>
        <position position="346"/>
    </location>
    <ligand>
        <name>Zn(2+)</name>
        <dbReference type="ChEBI" id="CHEBI:29105"/>
        <note>catalytic</note>
    </ligand>
</feature>
<feature type="disulfide bond" evidence="5">
    <location>
        <begin position="311"/>
        <end position="391"/>
    </location>
</feature>
<feature type="disulfide bond" evidence="5">
    <location>
        <begin position="351"/>
        <end position="375"/>
    </location>
</feature>
<feature type="disulfide bond" evidence="5">
    <location>
        <begin position="353"/>
        <end position="358"/>
    </location>
</feature>
<feature type="disulfide bond" evidence="2">
    <location>
        <begin position="433"/>
        <end position="442"/>
    </location>
</feature>
<feature type="disulfide bond" evidence="2">
    <location>
        <begin position="438"/>
        <end position="463"/>
    </location>
</feature>
<feature type="disulfide bond" evidence="2">
    <location>
        <begin position="439"/>
        <end position="468"/>
    </location>
</feature>
<feature type="disulfide bond" evidence="2">
    <location>
        <begin position="451"/>
        <end position="470"/>
    </location>
</feature>
<feature type="sequence conflict" description="In Ref. 4; AA sequence." evidence="11" ref="4">
    <original>P</original>
    <variation>T</variation>
    <location>
        <position position="481"/>
    </location>
</feature>
<name>VM2OC_ECHOC</name>
<comment type="function">
    <molecule>Snake venom metalloproteinase Eoc6</molecule>
    <text evidence="1">Impairs hemostasis in the envenomed animal.</text>
</comment>
<comment type="function">
    <molecule>Disintegrin ocellatusin</molecule>
    <text evidence="7">Inhibits ADP-induced platelet aggregation (IC(50)=168 nM). Inhibits alpha-5/beta-1 (ITGA5/ITGB1) integrin and induces the expression of a ligand-induced binding site epitope on beta-1 integrin subunit. Has a direct chemotactic stimulus on human neutrophils in vitro.</text>
</comment>
<comment type="subunit">
    <text evidence="7">Monomer (disintegrin).</text>
</comment>
<comment type="subcellular location">
    <subcellularLocation>
        <location evidence="7">Secreted</location>
    </subcellularLocation>
</comment>
<comment type="tissue specificity">
    <text evidence="12">Expressed by the venom gland.</text>
</comment>
<comment type="mass spectrometry" mass="5598.0" error="2.0" method="MALDI" evidence="7">
    <molecule>Disintegrin ocellatusin</molecule>
</comment>
<comment type="miscellaneous">
    <text>The disintegrin belongs to the short disintegrin subfamily.</text>
</comment>
<comment type="similarity">
    <text evidence="11">Belongs to the venom metalloproteinase (M12B) family. P-II subfamily. P-IIa sub-subfamily.</text>
</comment>
<comment type="caution">
    <text evidence="11">The disintegrin is also encoded by another precursor (AC Q3BER1).</text>
</comment>